<organism>
    <name type="scientific">Homo sapiens</name>
    <name type="common">Human</name>
    <dbReference type="NCBI Taxonomy" id="9606"/>
    <lineage>
        <taxon>Eukaryota</taxon>
        <taxon>Metazoa</taxon>
        <taxon>Chordata</taxon>
        <taxon>Craniata</taxon>
        <taxon>Vertebrata</taxon>
        <taxon>Euteleostomi</taxon>
        <taxon>Mammalia</taxon>
        <taxon>Eutheria</taxon>
        <taxon>Euarchontoglires</taxon>
        <taxon>Primates</taxon>
        <taxon>Haplorrhini</taxon>
        <taxon>Catarrhini</taxon>
        <taxon>Hominidae</taxon>
        <taxon>Homo</taxon>
    </lineage>
</organism>
<comment type="function">
    <text evidence="4">May down-regulate transcription mediated by NF-kappa-B and the serum response element.</text>
</comment>
<comment type="subcellular location">
    <subcellularLocation>
        <location evidence="4">Nucleus</location>
        <location evidence="4">Nucleolus</location>
    </subcellularLocation>
    <subcellularLocation>
        <location evidence="4">Nucleus</location>
    </subcellularLocation>
    <text evidence="4">Expressed throughout the nucleus and concentrated mainly in the nucleolus.</text>
</comment>
<proteinExistence type="evidence at protein level"/>
<protein>
    <recommendedName>
        <fullName>Zinc finger CCHC domain-containing protein 9</fullName>
    </recommendedName>
</protein>
<gene>
    <name type="primary">ZCCHC9</name>
</gene>
<feature type="chain" id="PRO_0000150965" description="Zinc finger CCHC domain-containing protein 9">
    <location>
        <begin position="1"/>
        <end position="271"/>
    </location>
</feature>
<feature type="zinc finger region" description="CCHC-type 1" evidence="1">
    <location>
        <begin position="128"/>
        <end position="145"/>
    </location>
</feature>
<feature type="zinc finger region" description="CCHC-type 2" evidence="1">
    <location>
        <begin position="155"/>
        <end position="172"/>
    </location>
</feature>
<feature type="zinc finger region" description="CCHC-type 3" evidence="1">
    <location>
        <begin position="184"/>
        <end position="201"/>
    </location>
</feature>
<feature type="zinc finger region" description="CCHC-type 4" evidence="1">
    <location>
        <begin position="211"/>
        <end position="228"/>
    </location>
</feature>
<feature type="region of interest" description="Disordered" evidence="2">
    <location>
        <begin position="1"/>
        <end position="40"/>
    </location>
</feature>
<feature type="modified residue" description="Phosphoserine" evidence="5">
    <location>
        <position position="48"/>
    </location>
</feature>
<feature type="sequence variant" id="VAR_028164" description="In dbSNP:rs16878594." evidence="3">
    <original>P</original>
    <variation>A</variation>
    <location>
        <position position="15"/>
    </location>
</feature>
<keyword id="KW-0479">Metal-binding</keyword>
<keyword id="KW-0539">Nucleus</keyword>
<keyword id="KW-0597">Phosphoprotein</keyword>
<keyword id="KW-1267">Proteomics identification</keyword>
<keyword id="KW-1185">Reference proteome</keyword>
<keyword id="KW-0677">Repeat</keyword>
<keyword id="KW-0804">Transcription</keyword>
<keyword id="KW-0862">Zinc</keyword>
<keyword id="KW-0863">Zinc-finger</keyword>
<sequence length="271" mass="30477">MTRWARVSTTYNKRPLPATSWEDMKKGSFEGTSQNLPKRKQLEANRLSLKNDAPQAKHKKNKKKKEYLNEDVNGFMEYLRQNSQMVHNGQIIATDSEEVREEIAVALKKDSRREGRRLKRQAAKKNAMVCFHCRKPGHGIADCPAALENQDMGTGICYRCGSTEHEITKCKAKVDPALGEFPFAKCFVCGEMGHLSRSCPDNPKGLYADGGGCKLCGSVEHLKKDCPESQNSERMVTVGRWAKGMSADYEEILDVPKPQKPKTKIPKVVNF</sequence>
<reference key="1">
    <citation type="journal article" date="2004" name="Nat. Genet.">
        <title>Complete sequencing and characterization of 21,243 full-length human cDNAs.</title>
        <authorList>
            <person name="Ota T."/>
            <person name="Suzuki Y."/>
            <person name="Nishikawa T."/>
            <person name="Otsuki T."/>
            <person name="Sugiyama T."/>
            <person name="Irie R."/>
            <person name="Wakamatsu A."/>
            <person name="Hayashi K."/>
            <person name="Sato H."/>
            <person name="Nagai K."/>
            <person name="Kimura K."/>
            <person name="Makita H."/>
            <person name="Sekine M."/>
            <person name="Obayashi M."/>
            <person name="Nishi T."/>
            <person name="Shibahara T."/>
            <person name="Tanaka T."/>
            <person name="Ishii S."/>
            <person name="Yamamoto J."/>
            <person name="Saito K."/>
            <person name="Kawai Y."/>
            <person name="Isono Y."/>
            <person name="Nakamura Y."/>
            <person name="Nagahari K."/>
            <person name="Murakami K."/>
            <person name="Yasuda T."/>
            <person name="Iwayanagi T."/>
            <person name="Wagatsuma M."/>
            <person name="Shiratori A."/>
            <person name="Sudo H."/>
            <person name="Hosoiri T."/>
            <person name="Kaku Y."/>
            <person name="Kodaira H."/>
            <person name="Kondo H."/>
            <person name="Sugawara M."/>
            <person name="Takahashi M."/>
            <person name="Kanda K."/>
            <person name="Yokoi T."/>
            <person name="Furuya T."/>
            <person name="Kikkawa E."/>
            <person name="Omura Y."/>
            <person name="Abe K."/>
            <person name="Kamihara K."/>
            <person name="Katsuta N."/>
            <person name="Sato K."/>
            <person name="Tanikawa M."/>
            <person name="Yamazaki M."/>
            <person name="Ninomiya K."/>
            <person name="Ishibashi T."/>
            <person name="Yamashita H."/>
            <person name="Murakawa K."/>
            <person name="Fujimori K."/>
            <person name="Tanai H."/>
            <person name="Kimata M."/>
            <person name="Watanabe M."/>
            <person name="Hiraoka S."/>
            <person name="Chiba Y."/>
            <person name="Ishida S."/>
            <person name="Ono Y."/>
            <person name="Takiguchi S."/>
            <person name="Watanabe S."/>
            <person name="Yosida M."/>
            <person name="Hotuta T."/>
            <person name="Kusano J."/>
            <person name="Kanehori K."/>
            <person name="Takahashi-Fujii A."/>
            <person name="Hara H."/>
            <person name="Tanase T.-O."/>
            <person name="Nomura Y."/>
            <person name="Togiya S."/>
            <person name="Komai F."/>
            <person name="Hara R."/>
            <person name="Takeuchi K."/>
            <person name="Arita M."/>
            <person name="Imose N."/>
            <person name="Musashino K."/>
            <person name="Yuuki H."/>
            <person name="Oshima A."/>
            <person name="Sasaki N."/>
            <person name="Aotsuka S."/>
            <person name="Yoshikawa Y."/>
            <person name="Matsunawa H."/>
            <person name="Ichihara T."/>
            <person name="Shiohata N."/>
            <person name="Sano S."/>
            <person name="Moriya S."/>
            <person name="Momiyama H."/>
            <person name="Satoh N."/>
            <person name="Takami S."/>
            <person name="Terashima Y."/>
            <person name="Suzuki O."/>
            <person name="Nakagawa S."/>
            <person name="Senoh A."/>
            <person name="Mizoguchi H."/>
            <person name="Goto Y."/>
            <person name="Shimizu F."/>
            <person name="Wakebe H."/>
            <person name="Hishigaki H."/>
            <person name="Watanabe T."/>
            <person name="Sugiyama A."/>
            <person name="Takemoto M."/>
            <person name="Kawakami B."/>
            <person name="Yamazaki M."/>
            <person name="Watanabe K."/>
            <person name="Kumagai A."/>
            <person name="Itakura S."/>
            <person name="Fukuzumi Y."/>
            <person name="Fujimori Y."/>
            <person name="Komiyama M."/>
            <person name="Tashiro H."/>
            <person name="Tanigami A."/>
            <person name="Fujiwara T."/>
            <person name="Ono T."/>
            <person name="Yamada K."/>
            <person name="Fujii Y."/>
            <person name="Ozaki K."/>
            <person name="Hirao M."/>
            <person name="Ohmori Y."/>
            <person name="Kawabata A."/>
            <person name="Hikiji T."/>
            <person name="Kobatake N."/>
            <person name="Inagaki H."/>
            <person name="Ikema Y."/>
            <person name="Okamoto S."/>
            <person name="Okitani R."/>
            <person name="Kawakami T."/>
            <person name="Noguchi S."/>
            <person name="Itoh T."/>
            <person name="Shigeta K."/>
            <person name="Senba T."/>
            <person name="Matsumura K."/>
            <person name="Nakajima Y."/>
            <person name="Mizuno T."/>
            <person name="Morinaga M."/>
            <person name="Sasaki M."/>
            <person name="Togashi T."/>
            <person name="Oyama M."/>
            <person name="Hata H."/>
            <person name="Watanabe M."/>
            <person name="Komatsu T."/>
            <person name="Mizushima-Sugano J."/>
            <person name="Satoh T."/>
            <person name="Shirai Y."/>
            <person name="Takahashi Y."/>
            <person name="Nakagawa K."/>
            <person name="Okumura K."/>
            <person name="Nagase T."/>
            <person name="Nomura N."/>
            <person name="Kikuchi H."/>
            <person name="Masuho Y."/>
            <person name="Yamashita R."/>
            <person name="Nakai K."/>
            <person name="Yada T."/>
            <person name="Nakamura Y."/>
            <person name="Ohara O."/>
            <person name="Isogai T."/>
            <person name="Sugano S."/>
        </authorList>
    </citation>
    <scope>NUCLEOTIDE SEQUENCE [LARGE SCALE MRNA]</scope>
    <source>
        <tissue>Pericardium</tissue>
    </source>
</reference>
<reference key="2">
    <citation type="journal article" date="2007" name="BMC Genomics">
        <title>The full-ORF clone resource of the German cDNA consortium.</title>
        <authorList>
            <person name="Bechtel S."/>
            <person name="Rosenfelder H."/>
            <person name="Duda A."/>
            <person name="Schmidt C.P."/>
            <person name="Ernst U."/>
            <person name="Wellenreuther R."/>
            <person name="Mehrle A."/>
            <person name="Schuster C."/>
            <person name="Bahr A."/>
            <person name="Bloecker H."/>
            <person name="Heubner D."/>
            <person name="Hoerlein A."/>
            <person name="Michel G."/>
            <person name="Wedler H."/>
            <person name="Koehrer K."/>
            <person name="Ottenwaelder B."/>
            <person name="Poustka A."/>
            <person name="Wiemann S."/>
            <person name="Schupp I."/>
        </authorList>
    </citation>
    <scope>NUCLEOTIDE SEQUENCE [LARGE SCALE MRNA]</scope>
    <source>
        <tissue>Amygdala</tissue>
    </source>
</reference>
<reference key="3">
    <citation type="submission" date="2005-07" db="EMBL/GenBank/DDBJ databases">
        <authorList>
            <person name="Mural R.J."/>
            <person name="Istrail S."/>
            <person name="Sutton G.G."/>
            <person name="Florea L."/>
            <person name="Halpern A.L."/>
            <person name="Mobarry C.M."/>
            <person name="Lippert R."/>
            <person name="Walenz B."/>
            <person name="Shatkay H."/>
            <person name="Dew I."/>
            <person name="Miller J.R."/>
            <person name="Flanigan M.J."/>
            <person name="Edwards N.J."/>
            <person name="Bolanos R."/>
            <person name="Fasulo D."/>
            <person name="Halldorsson B.V."/>
            <person name="Hannenhalli S."/>
            <person name="Turner R."/>
            <person name="Yooseph S."/>
            <person name="Lu F."/>
            <person name="Nusskern D.R."/>
            <person name="Shue B.C."/>
            <person name="Zheng X.H."/>
            <person name="Zhong F."/>
            <person name="Delcher A.L."/>
            <person name="Huson D.H."/>
            <person name="Kravitz S.A."/>
            <person name="Mouchard L."/>
            <person name="Reinert K."/>
            <person name="Remington K.A."/>
            <person name="Clark A.G."/>
            <person name="Waterman M.S."/>
            <person name="Eichler E.E."/>
            <person name="Adams M.D."/>
            <person name="Hunkapiller M.W."/>
            <person name="Myers E.W."/>
            <person name="Venter J.C."/>
        </authorList>
    </citation>
    <scope>NUCLEOTIDE SEQUENCE [LARGE SCALE GENOMIC DNA]</scope>
</reference>
<reference key="4">
    <citation type="journal article" date="2004" name="Genome Res.">
        <title>The status, quality, and expansion of the NIH full-length cDNA project: the Mammalian Gene Collection (MGC).</title>
        <authorList>
            <consortium name="The MGC Project Team"/>
        </authorList>
    </citation>
    <scope>NUCLEOTIDE SEQUENCE [LARGE SCALE MRNA]</scope>
    <scope>VARIANT ALA-15</scope>
    <source>
        <tissue>Melanoma</tissue>
    </source>
</reference>
<reference key="5">
    <citation type="journal article" date="2008" name="J. Genet. Genomics">
        <title>A nuclear localized protein ZCCHC9 is expressed in cerebral cortex and suppresses the MAPK signal pathway.</title>
        <authorList>
            <person name="Zhou A."/>
            <person name="Zhou J."/>
            <person name="Yang L."/>
            <person name="Liu M."/>
            <person name="Li H."/>
            <person name="Xu S."/>
            <person name="Han M."/>
            <person name="Zhang J."/>
        </authorList>
    </citation>
    <scope>FUNCTION</scope>
    <scope>SUBCELLULAR LOCATION</scope>
</reference>
<reference key="6">
    <citation type="journal article" date="2013" name="J. Proteome Res.">
        <title>Toward a comprehensive characterization of a human cancer cell phosphoproteome.</title>
        <authorList>
            <person name="Zhou H."/>
            <person name="Di Palma S."/>
            <person name="Preisinger C."/>
            <person name="Peng M."/>
            <person name="Polat A.N."/>
            <person name="Heck A.J."/>
            <person name="Mohammed S."/>
        </authorList>
    </citation>
    <scope>PHOSPHORYLATION [LARGE SCALE ANALYSIS] AT SER-48</scope>
    <scope>IDENTIFICATION BY MASS SPECTROMETRY [LARGE SCALE ANALYSIS]</scope>
    <source>
        <tissue>Erythroleukemia</tissue>
    </source>
</reference>
<accession>Q8N567</accession>
<accession>B2RAE7</accession>
<accession>Q9H027</accession>
<evidence type="ECO:0000255" key="1">
    <source>
        <dbReference type="PROSITE-ProRule" id="PRU00047"/>
    </source>
</evidence>
<evidence type="ECO:0000256" key="2">
    <source>
        <dbReference type="SAM" id="MobiDB-lite"/>
    </source>
</evidence>
<evidence type="ECO:0000269" key="3">
    <source>
    </source>
</evidence>
<evidence type="ECO:0000269" key="4">
    <source>
    </source>
</evidence>
<evidence type="ECO:0007744" key="5">
    <source>
    </source>
</evidence>
<name>ZCHC9_HUMAN</name>
<dbReference type="EMBL" id="AK314160">
    <property type="protein sequence ID" value="BAG36844.1"/>
    <property type="molecule type" value="mRNA"/>
</dbReference>
<dbReference type="EMBL" id="AL512712">
    <property type="protein sequence ID" value="CAC21654.1"/>
    <property type="molecule type" value="mRNA"/>
</dbReference>
<dbReference type="EMBL" id="CH471084">
    <property type="protein sequence ID" value="EAW95870.1"/>
    <property type="molecule type" value="Genomic_DNA"/>
</dbReference>
<dbReference type="EMBL" id="BC032736">
    <property type="protein sequence ID" value="AAH32736.1"/>
    <property type="molecule type" value="mRNA"/>
</dbReference>
<dbReference type="CCDS" id="CCDS4054.1"/>
<dbReference type="RefSeq" id="NP_001124507.1">
    <property type="nucleotide sequence ID" value="NM_001131035.2"/>
</dbReference>
<dbReference type="RefSeq" id="NP_001124508.1">
    <property type="nucleotide sequence ID" value="NM_001131036.2"/>
</dbReference>
<dbReference type="RefSeq" id="NP_115656.1">
    <property type="nucleotide sequence ID" value="NM_032280.3"/>
</dbReference>
<dbReference type="RefSeq" id="XP_047273783.1">
    <property type="nucleotide sequence ID" value="XM_047417827.1"/>
</dbReference>
<dbReference type="RefSeq" id="XP_047273784.1">
    <property type="nucleotide sequence ID" value="XM_047417828.1"/>
</dbReference>
<dbReference type="BMRB" id="Q8N567"/>
<dbReference type="BioGRID" id="123971">
    <property type="interactions" value="111"/>
</dbReference>
<dbReference type="FunCoup" id="Q8N567">
    <property type="interactions" value="1682"/>
</dbReference>
<dbReference type="IntAct" id="Q8N567">
    <property type="interactions" value="65"/>
</dbReference>
<dbReference type="MINT" id="Q8N567"/>
<dbReference type="STRING" id="9606.ENSP00000254037"/>
<dbReference type="iPTMnet" id="Q8N567"/>
<dbReference type="PhosphoSitePlus" id="Q8N567"/>
<dbReference type="BioMuta" id="ZCCHC9"/>
<dbReference type="DMDM" id="116242852"/>
<dbReference type="jPOST" id="Q8N567"/>
<dbReference type="MassIVE" id="Q8N567"/>
<dbReference type="PaxDb" id="9606-ENSP00000254037"/>
<dbReference type="PeptideAtlas" id="Q8N567"/>
<dbReference type="ProteomicsDB" id="72007"/>
<dbReference type="Pumba" id="Q8N567"/>
<dbReference type="Antibodypedia" id="24688">
    <property type="antibodies" value="37 antibodies from 14 providers"/>
</dbReference>
<dbReference type="DNASU" id="84240"/>
<dbReference type="Ensembl" id="ENST00000254037.6">
    <property type="protein sequence ID" value="ENSP00000254037.2"/>
    <property type="gene ID" value="ENSG00000131732.12"/>
</dbReference>
<dbReference type="Ensembl" id="ENST00000380199.9">
    <property type="protein sequence ID" value="ENSP00000369546.5"/>
    <property type="gene ID" value="ENSG00000131732.12"/>
</dbReference>
<dbReference type="Ensembl" id="ENST00000407610.8">
    <property type="protein sequence ID" value="ENSP00000385047.3"/>
    <property type="gene ID" value="ENSG00000131732.12"/>
</dbReference>
<dbReference type="Ensembl" id="ENST00000438268.2">
    <property type="protein sequence ID" value="ENSP00000412637.2"/>
    <property type="gene ID" value="ENSG00000131732.12"/>
</dbReference>
<dbReference type="GeneID" id="84240"/>
<dbReference type="KEGG" id="hsa:84240"/>
<dbReference type="MANE-Select" id="ENST00000407610.8">
    <property type="protein sequence ID" value="ENSP00000385047.3"/>
    <property type="RefSeq nucleotide sequence ID" value="NM_001131035.2"/>
    <property type="RefSeq protein sequence ID" value="NP_001124507.1"/>
</dbReference>
<dbReference type="UCSC" id="uc003khi.4">
    <property type="organism name" value="human"/>
</dbReference>
<dbReference type="AGR" id="HGNC:25424"/>
<dbReference type="CTD" id="84240"/>
<dbReference type="DisGeNET" id="84240"/>
<dbReference type="GeneCards" id="ZCCHC9"/>
<dbReference type="HGNC" id="HGNC:25424">
    <property type="gene designation" value="ZCCHC9"/>
</dbReference>
<dbReference type="HPA" id="ENSG00000131732">
    <property type="expression patterns" value="Low tissue specificity"/>
</dbReference>
<dbReference type="MIM" id="620382">
    <property type="type" value="gene"/>
</dbReference>
<dbReference type="neXtProt" id="NX_Q8N567"/>
<dbReference type="OpenTargets" id="ENSG00000131732"/>
<dbReference type="PharmGKB" id="PA134931870"/>
<dbReference type="VEuPathDB" id="HostDB:ENSG00000131732"/>
<dbReference type="eggNOG" id="KOG4400">
    <property type="taxonomic scope" value="Eukaryota"/>
</dbReference>
<dbReference type="GeneTree" id="ENSGT00950000183041"/>
<dbReference type="HOGENOM" id="CLU_054987_1_0_1"/>
<dbReference type="InParanoid" id="Q8N567"/>
<dbReference type="OMA" id="RLKRQEM"/>
<dbReference type="OrthoDB" id="3863715at2759"/>
<dbReference type="PAN-GO" id="Q8N567">
    <property type="GO annotations" value="0 GO annotations based on evolutionary models"/>
</dbReference>
<dbReference type="PhylomeDB" id="Q8N567"/>
<dbReference type="TreeFam" id="TF352294"/>
<dbReference type="PathwayCommons" id="Q8N567"/>
<dbReference type="SignaLink" id="Q8N567"/>
<dbReference type="BioGRID-ORCS" id="84240">
    <property type="hits" value="641 hits in 1154 CRISPR screens"/>
</dbReference>
<dbReference type="CD-CODE" id="91857CE7">
    <property type="entry name" value="Nucleolus"/>
</dbReference>
<dbReference type="GenomeRNAi" id="84240"/>
<dbReference type="Pharos" id="Q8N567">
    <property type="development level" value="Tdark"/>
</dbReference>
<dbReference type="PRO" id="PR:Q8N567"/>
<dbReference type="Proteomes" id="UP000005640">
    <property type="component" value="Chromosome 5"/>
</dbReference>
<dbReference type="RNAct" id="Q8N567">
    <property type="molecule type" value="protein"/>
</dbReference>
<dbReference type="Bgee" id="ENSG00000131732">
    <property type="expression patterns" value="Expressed in sperm and 176 other cell types or tissues"/>
</dbReference>
<dbReference type="ExpressionAtlas" id="Q8N567">
    <property type="expression patterns" value="baseline and differential"/>
</dbReference>
<dbReference type="GO" id="GO:0005730">
    <property type="term" value="C:nucleolus"/>
    <property type="evidence" value="ECO:0000314"/>
    <property type="project" value="HPA"/>
</dbReference>
<dbReference type="GO" id="GO:0005654">
    <property type="term" value="C:nucleoplasm"/>
    <property type="evidence" value="ECO:0000314"/>
    <property type="project" value="HPA"/>
</dbReference>
<dbReference type="GO" id="GO:0003723">
    <property type="term" value="F:RNA binding"/>
    <property type="evidence" value="ECO:0007005"/>
    <property type="project" value="UniProtKB"/>
</dbReference>
<dbReference type="GO" id="GO:0008270">
    <property type="term" value="F:zinc ion binding"/>
    <property type="evidence" value="ECO:0007669"/>
    <property type="project" value="UniProtKB-KW"/>
</dbReference>
<dbReference type="FunFam" id="4.10.60.10:FF:000017">
    <property type="entry name" value="zinc finger CCHC domain-containing protein 9"/>
    <property type="match status" value="1"/>
</dbReference>
<dbReference type="FunFam" id="4.10.60.10:FF:000091">
    <property type="entry name" value="Zinc finger CCHC-type-containing 9"/>
    <property type="match status" value="1"/>
</dbReference>
<dbReference type="Gene3D" id="4.10.60.10">
    <property type="entry name" value="Zinc finger, CCHC-type"/>
    <property type="match status" value="2"/>
</dbReference>
<dbReference type="InterPro" id="IPR042246">
    <property type="entry name" value="ZCCHC9"/>
</dbReference>
<dbReference type="InterPro" id="IPR001878">
    <property type="entry name" value="Znf_CCHC"/>
</dbReference>
<dbReference type="InterPro" id="IPR036875">
    <property type="entry name" value="Znf_CCHC_sf"/>
</dbReference>
<dbReference type="PANTHER" id="PTHR46242:SF1">
    <property type="entry name" value="ZINC FINGER CCHC DOMAIN-CONTAINING PROTEIN 9"/>
    <property type="match status" value="1"/>
</dbReference>
<dbReference type="PANTHER" id="PTHR46242">
    <property type="entry name" value="ZINC FINGER CCHC DOMAIN-CONTAINING PROTEIN 9 ZCCHC9"/>
    <property type="match status" value="1"/>
</dbReference>
<dbReference type="Pfam" id="PF00098">
    <property type="entry name" value="zf-CCHC"/>
    <property type="match status" value="2"/>
</dbReference>
<dbReference type="SMART" id="SM00343">
    <property type="entry name" value="ZnF_C2HC"/>
    <property type="match status" value="4"/>
</dbReference>
<dbReference type="SUPFAM" id="SSF57756">
    <property type="entry name" value="Retrovirus zinc finger-like domains"/>
    <property type="match status" value="2"/>
</dbReference>
<dbReference type="PROSITE" id="PS50158">
    <property type="entry name" value="ZF_CCHC"/>
    <property type="match status" value="2"/>
</dbReference>